<dbReference type="EC" id="2.7.11.1" evidence="8"/>
<dbReference type="EMBL" id="AF077659">
    <property type="protein sequence ID" value="AAC63011.1"/>
    <property type="status" value="ALT_FRAME"/>
    <property type="molecule type" value="mRNA"/>
</dbReference>
<dbReference type="EMBL" id="AF273680">
    <property type="protein sequence ID" value="AAG02078.1"/>
    <property type="molecule type" value="mRNA"/>
</dbReference>
<dbReference type="EMBL" id="AF208292">
    <property type="protein sequence ID" value="AAG41237.1"/>
    <property type="molecule type" value="mRNA"/>
</dbReference>
<dbReference type="EMBL" id="AF333791">
    <property type="protein sequence ID" value="AAK07649.1"/>
    <property type="molecule type" value="mRNA"/>
</dbReference>
<dbReference type="EMBL" id="AF333792">
    <property type="protein sequence ID" value="AAK07650.1"/>
    <property type="molecule type" value="mRNA"/>
</dbReference>
<dbReference type="EMBL" id="AF170301">
    <property type="protein sequence ID" value="AAD52566.1"/>
    <property type="molecule type" value="mRNA"/>
</dbReference>
<dbReference type="EMBL" id="AF170302">
    <property type="protein sequence ID" value="AAD52567.1"/>
    <property type="molecule type" value="mRNA"/>
</dbReference>
<dbReference type="EMBL" id="AK016742">
    <property type="protein sequence ID" value="BAB30405.1"/>
    <property type="molecule type" value="mRNA"/>
</dbReference>
<dbReference type="EMBL" id="AK019821">
    <property type="protein sequence ID" value="BAB31866.1"/>
    <property type="molecule type" value="mRNA"/>
</dbReference>
<dbReference type="CCDS" id="CCDS20017.2">
    <molecule id="Q9QZR5-1"/>
</dbReference>
<dbReference type="CCDS" id="CCDS80527.1">
    <molecule id="Q9QZR5-2"/>
</dbReference>
<dbReference type="PIR" id="T17088">
    <property type="entry name" value="T17088"/>
</dbReference>
<dbReference type="RefSeq" id="NP_001129537.1">
    <property type="nucleotide sequence ID" value="NM_001136065.2"/>
</dbReference>
<dbReference type="RefSeq" id="NP_001281072.1">
    <molecule id="Q9QZR5-2"/>
    <property type="nucleotide sequence ID" value="NM_001294143.2"/>
</dbReference>
<dbReference type="RefSeq" id="NP_001281073.1">
    <property type="nucleotide sequence ID" value="NM_001294144.1"/>
</dbReference>
<dbReference type="RefSeq" id="NP_034563.2">
    <molecule id="Q9QZR5-1"/>
    <property type="nucleotide sequence ID" value="NM_010433.3"/>
</dbReference>
<dbReference type="SMR" id="Q9QZR5"/>
<dbReference type="BioGRID" id="200307">
    <property type="interactions" value="11"/>
</dbReference>
<dbReference type="DIP" id="DIP-31712N"/>
<dbReference type="FunCoup" id="Q9QZR5">
    <property type="interactions" value="2672"/>
</dbReference>
<dbReference type="IntAct" id="Q9QZR5">
    <property type="interactions" value="12"/>
</dbReference>
<dbReference type="MINT" id="Q9QZR5"/>
<dbReference type="STRING" id="10090.ENSMUSP00000124133"/>
<dbReference type="GlyGen" id="Q9QZR5">
    <property type="glycosylation" value="3 sites, 1 O-linked glycan (1 site)"/>
</dbReference>
<dbReference type="iPTMnet" id="Q9QZR5"/>
<dbReference type="PhosphoSitePlus" id="Q9QZR5"/>
<dbReference type="jPOST" id="Q9QZR5"/>
<dbReference type="PaxDb" id="10090-ENSMUSP00000124133"/>
<dbReference type="ProteomicsDB" id="269598">
    <molecule id="Q9QZR5-1"/>
</dbReference>
<dbReference type="ProteomicsDB" id="269599">
    <molecule id="Q9QZR5-2"/>
</dbReference>
<dbReference type="ProteomicsDB" id="269600">
    <molecule id="Q9QZR5-3"/>
</dbReference>
<dbReference type="ProteomicsDB" id="269601">
    <molecule id="Q9QZR5-4"/>
</dbReference>
<dbReference type="ProteomicsDB" id="269602">
    <molecule id="Q9QZR5-5"/>
</dbReference>
<dbReference type="Antibodypedia" id="9921">
    <property type="antibodies" value="366 antibodies from 33 providers"/>
</dbReference>
<dbReference type="DNASU" id="15258"/>
<dbReference type="Ensembl" id="ENSMUST00000161779.8">
    <molecule id="Q9QZR5-1"/>
    <property type="protein sequence ID" value="ENSMUSP00000124133.2"/>
    <property type="gene ID" value="ENSMUSG00000061436.16"/>
</dbReference>
<dbReference type="Ensembl" id="ENSMUST00000162359.8">
    <molecule id="Q9QZR5-2"/>
    <property type="protein sequence ID" value="ENSMUSP00000125150.2"/>
    <property type="gene ID" value="ENSMUSG00000061436.16"/>
</dbReference>
<dbReference type="GeneID" id="15258"/>
<dbReference type="KEGG" id="mmu:15258"/>
<dbReference type="UCSC" id="uc009bkw.3">
    <molecule id="Q9QZR5-4"/>
    <property type="organism name" value="mouse"/>
</dbReference>
<dbReference type="UCSC" id="uc009bkx.2">
    <molecule id="Q9QZR5-1"/>
    <property type="organism name" value="mouse"/>
</dbReference>
<dbReference type="UCSC" id="uc009blb.3">
    <molecule id="Q9QZR5-3"/>
    <property type="organism name" value="mouse"/>
</dbReference>
<dbReference type="AGR" id="MGI:1314872"/>
<dbReference type="CTD" id="28996"/>
<dbReference type="MGI" id="MGI:1314872">
    <property type="gene designation" value="Hipk2"/>
</dbReference>
<dbReference type="VEuPathDB" id="HostDB:ENSMUSG00000061436"/>
<dbReference type="eggNOG" id="KOG0667">
    <property type="taxonomic scope" value="Eukaryota"/>
</dbReference>
<dbReference type="GeneTree" id="ENSGT00940000157742"/>
<dbReference type="InParanoid" id="Q9QZR5"/>
<dbReference type="OMA" id="ARHPVQH"/>
<dbReference type="OrthoDB" id="9332038at2759"/>
<dbReference type="PhylomeDB" id="Q9QZR5"/>
<dbReference type="TreeFam" id="TF105417"/>
<dbReference type="BRENDA" id="2.7.11.1">
    <property type="organism ID" value="3474"/>
</dbReference>
<dbReference type="Reactome" id="R-MMU-3899300">
    <property type="pathway name" value="SUMOylation of transcription cofactors"/>
</dbReference>
<dbReference type="Reactome" id="R-MMU-6804756">
    <property type="pathway name" value="Regulation of TP53 Activity through Phosphorylation"/>
</dbReference>
<dbReference type="Reactome" id="R-MMU-8939243">
    <property type="pathway name" value="RUNX1 interacts with co-factors whose precise effect on RUNX1 targets is not known"/>
</dbReference>
<dbReference type="Reactome" id="R-MMU-9022692">
    <property type="pathway name" value="Regulation of MECP2 expression and activity"/>
</dbReference>
<dbReference type="BioGRID-ORCS" id="15258">
    <property type="hits" value="1 hit in 83 CRISPR screens"/>
</dbReference>
<dbReference type="ChiTaRS" id="Hipk2">
    <property type="organism name" value="mouse"/>
</dbReference>
<dbReference type="PRO" id="PR:Q9QZR5"/>
<dbReference type="Proteomes" id="UP000000589">
    <property type="component" value="Chromosome 6"/>
</dbReference>
<dbReference type="RNAct" id="Q9QZR5">
    <property type="molecule type" value="protein"/>
</dbReference>
<dbReference type="Bgee" id="ENSMUSG00000061436">
    <property type="expression patterns" value="Expressed in vestibular membrane of cochlear duct and 280 other cell types or tissues"/>
</dbReference>
<dbReference type="ExpressionAtlas" id="Q9QZR5">
    <property type="expression patterns" value="baseline and differential"/>
</dbReference>
<dbReference type="GO" id="GO:0005737">
    <property type="term" value="C:cytoplasm"/>
    <property type="evidence" value="ECO:0000314"/>
    <property type="project" value="MGI"/>
</dbReference>
<dbReference type="GO" id="GO:0010494">
    <property type="term" value="C:cytoplasmic stress granule"/>
    <property type="evidence" value="ECO:0000250"/>
    <property type="project" value="UniProtKB"/>
</dbReference>
<dbReference type="GO" id="GO:0016604">
    <property type="term" value="C:nuclear body"/>
    <property type="evidence" value="ECO:0000250"/>
    <property type="project" value="UniProtKB"/>
</dbReference>
<dbReference type="GO" id="GO:0005634">
    <property type="term" value="C:nucleus"/>
    <property type="evidence" value="ECO:0000314"/>
    <property type="project" value="UniProtKB"/>
</dbReference>
<dbReference type="GO" id="GO:0016605">
    <property type="term" value="C:PML body"/>
    <property type="evidence" value="ECO:0000304"/>
    <property type="project" value="MGI"/>
</dbReference>
<dbReference type="GO" id="GO:0032991">
    <property type="term" value="C:protein-containing complex"/>
    <property type="evidence" value="ECO:0000314"/>
    <property type="project" value="MGI"/>
</dbReference>
<dbReference type="GO" id="GO:0090575">
    <property type="term" value="C:RNA polymerase II transcription regulator complex"/>
    <property type="evidence" value="ECO:0000315"/>
    <property type="project" value="BHF-UCL"/>
</dbReference>
<dbReference type="GO" id="GO:0005524">
    <property type="term" value="F:ATP binding"/>
    <property type="evidence" value="ECO:0007669"/>
    <property type="project" value="UniProtKB-KW"/>
</dbReference>
<dbReference type="GO" id="GO:0004672">
    <property type="term" value="F:protein kinase activity"/>
    <property type="evidence" value="ECO:0000314"/>
    <property type="project" value="UniProtKB"/>
</dbReference>
<dbReference type="GO" id="GO:0106310">
    <property type="term" value="F:protein serine kinase activity"/>
    <property type="evidence" value="ECO:0007669"/>
    <property type="project" value="RHEA"/>
</dbReference>
<dbReference type="GO" id="GO:0004674">
    <property type="term" value="F:protein serine/threonine kinase activity"/>
    <property type="evidence" value="ECO:0000314"/>
    <property type="project" value="BHF-UCL"/>
</dbReference>
<dbReference type="GO" id="GO:0061629">
    <property type="term" value="F:RNA polymerase II-specific DNA-binding transcription factor binding"/>
    <property type="evidence" value="ECO:0000353"/>
    <property type="project" value="BHF-UCL"/>
</dbReference>
<dbReference type="GO" id="GO:0046332">
    <property type="term" value="F:SMAD binding"/>
    <property type="evidence" value="ECO:0007669"/>
    <property type="project" value="Ensembl"/>
</dbReference>
<dbReference type="GO" id="GO:0003714">
    <property type="term" value="F:transcription corepressor activity"/>
    <property type="evidence" value="ECO:0000314"/>
    <property type="project" value="UniProtKB"/>
</dbReference>
<dbReference type="GO" id="GO:0046790">
    <property type="term" value="F:virion binding"/>
    <property type="evidence" value="ECO:0000250"/>
    <property type="project" value="UniProtKB"/>
</dbReference>
<dbReference type="GO" id="GO:0008344">
    <property type="term" value="P:adult locomotory behavior"/>
    <property type="evidence" value="ECO:0000315"/>
    <property type="project" value="MGI"/>
</dbReference>
<dbReference type="GO" id="GO:0007628">
    <property type="term" value="P:adult walking behavior"/>
    <property type="evidence" value="ECO:0000315"/>
    <property type="project" value="MGI"/>
</dbReference>
<dbReference type="GO" id="GO:0009952">
    <property type="term" value="P:anterior/posterior pattern specification"/>
    <property type="evidence" value="ECO:0000316"/>
    <property type="project" value="MGI"/>
</dbReference>
<dbReference type="GO" id="GO:0008283">
    <property type="term" value="P:cell population proliferation"/>
    <property type="evidence" value="ECO:0000316"/>
    <property type="project" value="MGI"/>
</dbReference>
<dbReference type="GO" id="GO:0030330">
    <property type="term" value="P:DNA damage response, signal transduction by p53 class mediator"/>
    <property type="evidence" value="ECO:0007669"/>
    <property type="project" value="Ensembl"/>
</dbReference>
<dbReference type="GO" id="GO:0048596">
    <property type="term" value="P:embryonic camera-type eye morphogenesis"/>
    <property type="evidence" value="ECO:0000315"/>
    <property type="project" value="DFLAT"/>
</dbReference>
<dbReference type="GO" id="GO:0060059">
    <property type="term" value="P:embryonic retina morphogenesis in camera-type eye"/>
    <property type="evidence" value="ECO:0000315"/>
    <property type="project" value="DFLAT"/>
</dbReference>
<dbReference type="GO" id="GO:0010467">
    <property type="term" value="P:gene expression"/>
    <property type="evidence" value="ECO:0000316"/>
    <property type="project" value="MGI"/>
</dbReference>
<dbReference type="GO" id="GO:0042771">
    <property type="term" value="P:intrinsic apoptotic signaling pathway in response to DNA damage by p53 class mediator"/>
    <property type="evidence" value="ECO:0000316"/>
    <property type="project" value="MGI"/>
</dbReference>
<dbReference type="GO" id="GO:0061072">
    <property type="term" value="P:iris morphogenesis"/>
    <property type="evidence" value="ECO:0000315"/>
    <property type="project" value="DFLAT"/>
</dbReference>
<dbReference type="GO" id="GO:0060235">
    <property type="term" value="P:lens induction in camera-type eye"/>
    <property type="evidence" value="ECO:0000315"/>
    <property type="project" value="DFLAT"/>
</dbReference>
<dbReference type="GO" id="GO:0060425">
    <property type="term" value="P:lung morphogenesis"/>
    <property type="evidence" value="ECO:0000316"/>
    <property type="project" value="MGI"/>
</dbReference>
<dbReference type="GO" id="GO:0030514">
    <property type="term" value="P:negative regulation of BMP signaling pathway"/>
    <property type="evidence" value="ECO:0007669"/>
    <property type="project" value="Ensembl"/>
</dbReference>
<dbReference type="GO" id="GO:0043524">
    <property type="term" value="P:negative regulation of neuron apoptotic process"/>
    <property type="evidence" value="ECO:0000315"/>
    <property type="project" value="MGI"/>
</dbReference>
<dbReference type="GO" id="GO:0000122">
    <property type="term" value="P:negative regulation of transcription by RNA polymerase II"/>
    <property type="evidence" value="ECO:0000314"/>
    <property type="project" value="UniProtKB"/>
</dbReference>
<dbReference type="GO" id="GO:2000059">
    <property type="term" value="P:negative regulation of ubiquitin-dependent protein catabolic process"/>
    <property type="evidence" value="ECO:0007669"/>
    <property type="project" value="Ensembl"/>
</dbReference>
<dbReference type="GO" id="GO:0051402">
    <property type="term" value="P:neuron apoptotic process"/>
    <property type="evidence" value="ECO:0000315"/>
    <property type="project" value="MGI"/>
</dbReference>
<dbReference type="GO" id="GO:0030182">
    <property type="term" value="P:neuron differentiation"/>
    <property type="evidence" value="ECO:0000315"/>
    <property type="project" value="DFLAT"/>
</dbReference>
<dbReference type="GO" id="GO:0045766">
    <property type="term" value="P:positive regulation of angiogenesis"/>
    <property type="evidence" value="ECO:0007669"/>
    <property type="project" value="Ensembl"/>
</dbReference>
<dbReference type="GO" id="GO:0008284">
    <property type="term" value="P:positive regulation of cell population proliferation"/>
    <property type="evidence" value="ECO:0000316"/>
    <property type="project" value="MGI"/>
</dbReference>
<dbReference type="GO" id="GO:0043388">
    <property type="term" value="P:positive regulation of DNA binding"/>
    <property type="evidence" value="ECO:0000314"/>
    <property type="project" value="UniProtKB"/>
</dbReference>
<dbReference type="GO" id="GO:0046330">
    <property type="term" value="P:positive regulation of JNK cascade"/>
    <property type="evidence" value="ECO:0000250"/>
    <property type="project" value="UniProtKB"/>
</dbReference>
<dbReference type="GO" id="GO:0045944">
    <property type="term" value="P:positive regulation of transcription by RNA polymerase II"/>
    <property type="evidence" value="ECO:0000315"/>
    <property type="project" value="BHF-UCL"/>
</dbReference>
<dbReference type="GO" id="GO:0030511">
    <property type="term" value="P:positive regulation of transforming growth factor beta receptor signaling pathway"/>
    <property type="evidence" value="ECO:0000250"/>
    <property type="project" value="UniProtKB"/>
</dbReference>
<dbReference type="GO" id="GO:0006468">
    <property type="term" value="P:protein phosphorylation"/>
    <property type="evidence" value="ECO:0000314"/>
    <property type="project" value="UniProtKB"/>
</dbReference>
<dbReference type="GO" id="GO:0003016">
    <property type="term" value="P:respiratory system process"/>
    <property type="evidence" value="ECO:0000316"/>
    <property type="project" value="MGI"/>
</dbReference>
<dbReference type="GO" id="GO:0010842">
    <property type="term" value="P:retina layer formation"/>
    <property type="evidence" value="ECO:0000315"/>
    <property type="project" value="DFLAT"/>
</dbReference>
<dbReference type="GO" id="GO:0060395">
    <property type="term" value="P:SMAD protein signal transduction"/>
    <property type="evidence" value="ECO:0007669"/>
    <property type="project" value="Ensembl"/>
</dbReference>
<dbReference type="GO" id="GO:0007224">
    <property type="term" value="P:smoothened signaling pathway"/>
    <property type="evidence" value="ECO:0000316"/>
    <property type="project" value="MGI"/>
</dbReference>
<dbReference type="GO" id="GO:0030878">
    <property type="term" value="P:thyroid gland development"/>
    <property type="evidence" value="ECO:0000316"/>
    <property type="project" value="MGI"/>
</dbReference>
<dbReference type="GO" id="GO:0007179">
    <property type="term" value="P:transforming growth factor beta receptor signaling pathway"/>
    <property type="evidence" value="ECO:0000315"/>
    <property type="project" value="MGI"/>
</dbReference>
<dbReference type="GO" id="GO:0050882">
    <property type="term" value="P:voluntary musculoskeletal movement"/>
    <property type="evidence" value="ECO:0000315"/>
    <property type="project" value="MGI"/>
</dbReference>
<dbReference type="CDD" id="cd14227">
    <property type="entry name" value="STKc_HIPK2"/>
    <property type="match status" value="1"/>
</dbReference>
<dbReference type="FunFam" id="1.10.510.10:FF:000029">
    <property type="entry name" value="Homeodomain-interacting protein kinase 2 isoform 1"/>
    <property type="match status" value="1"/>
</dbReference>
<dbReference type="FunFam" id="3.30.200.20:FF:000022">
    <property type="entry name" value="Homeodomain-interacting protein kinase 2 isoform 1"/>
    <property type="match status" value="1"/>
</dbReference>
<dbReference type="Gene3D" id="3.30.200.20">
    <property type="entry name" value="Phosphorylase Kinase, domain 1"/>
    <property type="match status" value="1"/>
</dbReference>
<dbReference type="Gene3D" id="1.10.510.10">
    <property type="entry name" value="Transferase(Phosphotransferase) domain 1"/>
    <property type="match status" value="1"/>
</dbReference>
<dbReference type="InterPro" id="IPR011009">
    <property type="entry name" value="Kinase-like_dom_sf"/>
</dbReference>
<dbReference type="InterPro" id="IPR000719">
    <property type="entry name" value="Prot_kinase_dom"/>
</dbReference>
<dbReference type="InterPro" id="IPR017441">
    <property type="entry name" value="Protein_kinase_ATP_BS"/>
</dbReference>
<dbReference type="InterPro" id="IPR008271">
    <property type="entry name" value="Ser/Thr_kinase_AS"/>
</dbReference>
<dbReference type="InterPro" id="IPR050494">
    <property type="entry name" value="Ser_Thr_dual-spec_kinase"/>
</dbReference>
<dbReference type="PANTHER" id="PTHR24058">
    <property type="entry name" value="DUAL SPECIFICITY PROTEIN KINASE"/>
    <property type="match status" value="1"/>
</dbReference>
<dbReference type="PANTHER" id="PTHR24058:SF53">
    <property type="entry name" value="HOMEODOMAIN-INTERACTING PROTEIN KINASE 2"/>
    <property type="match status" value="1"/>
</dbReference>
<dbReference type="Pfam" id="PF00069">
    <property type="entry name" value="Pkinase"/>
    <property type="match status" value="1"/>
</dbReference>
<dbReference type="SMART" id="SM00220">
    <property type="entry name" value="S_TKc"/>
    <property type="match status" value="1"/>
</dbReference>
<dbReference type="SUPFAM" id="SSF56112">
    <property type="entry name" value="Protein kinase-like (PK-like)"/>
    <property type="match status" value="1"/>
</dbReference>
<dbReference type="PROSITE" id="PS00107">
    <property type="entry name" value="PROTEIN_KINASE_ATP"/>
    <property type="match status" value="1"/>
</dbReference>
<dbReference type="PROSITE" id="PS50011">
    <property type="entry name" value="PROTEIN_KINASE_DOM"/>
    <property type="match status" value="1"/>
</dbReference>
<dbReference type="PROSITE" id="PS00108">
    <property type="entry name" value="PROTEIN_KINASE_ST"/>
    <property type="match status" value="1"/>
</dbReference>
<gene>
    <name type="primary">Hipk2</name>
    <name type="synonym">Nbak1</name>
    <name type="synonym">Stank</name>
</gene>
<proteinExistence type="evidence at protein level"/>
<feature type="chain" id="PRO_0000085997" description="Homeodomain-interacting protein kinase 2">
    <location>
        <begin position="1"/>
        <end position="1196"/>
    </location>
</feature>
<feature type="domain" description="Protein kinase" evidence="3">
    <location>
        <begin position="199"/>
        <end position="527"/>
    </location>
</feature>
<feature type="region of interest" description="Disordered" evidence="4">
    <location>
        <begin position="50"/>
        <end position="69"/>
    </location>
</feature>
<feature type="region of interest" description="Transcriptional corepression">
    <location>
        <begin position="97"/>
        <end position="230"/>
    </location>
</feature>
<feature type="region of interest" description="Interaction with DAXX" evidence="1">
    <location>
        <begin position="189"/>
        <end position="520"/>
    </location>
</feature>
<feature type="region of interest" description="Interaction with SKI and SMAD1" evidence="1">
    <location>
        <begin position="539"/>
        <end position="844"/>
    </location>
</feature>
<feature type="region of interest" description="Interaction with DAZAP2" evidence="2">
    <location>
        <begin position="600"/>
        <end position="800"/>
    </location>
</feature>
<feature type="region of interest" description="Interaction with POU4F1" evidence="13">
    <location>
        <begin position="752"/>
        <end position="897"/>
    </location>
</feature>
<feature type="region of interest" description="Interaction with CTBP1" evidence="10">
    <location>
        <begin position="774"/>
        <end position="876"/>
    </location>
</feature>
<feature type="region of interest" description="Interaction with HMGA1" evidence="7">
    <location>
        <begin position="787"/>
        <end position="897"/>
    </location>
</feature>
<feature type="region of interest" description="Disordered" evidence="4">
    <location>
        <begin position="792"/>
        <end position="847"/>
    </location>
</feature>
<feature type="region of interest" description="Interaction with TP53 and TP73" evidence="8">
    <location>
        <begin position="839"/>
        <end position="934"/>
    </location>
</feature>
<feature type="region of interest" description="Localization to nuclear speckles">
    <location>
        <begin position="873"/>
        <end position="980"/>
    </location>
</feature>
<feature type="region of interest" description="Required for localization to nuclear speckles" evidence="1">
    <location>
        <begin position="873"/>
        <end position="980"/>
    </location>
</feature>
<feature type="region of interest" description="Interaction with UBE2I" evidence="5">
    <location>
        <begin position="873"/>
        <end position="907"/>
    </location>
</feature>
<feature type="region of interest" description="SUMO interaction motifs (SIM); required for nuclear localization and kinase activity" evidence="1">
    <location>
        <begin position="884"/>
        <end position="908"/>
    </location>
</feature>
<feature type="region of interest" description="Disordered" evidence="4">
    <location>
        <begin position="891"/>
        <end position="963"/>
    </location>
</feature>
<feature type="region of interest" description="Interaction with AXIN1" evidence="14">
    <location>
        <begin position="935"/>
        <end position="1050"/>
    </location>
</feature>
<feature type="region of interest" description="Autoinhibitory domain (AID)" evidence="1">
    <location>
        <begin position="984"/>
        <end position="1196"/>
    </location>
</feature>
<feature type="region of interest" description="Disordered" evidence="4">
    <location>
        <begin position="991"/>
        <end position="1058"/>
    </location>
</feature>
<feature type="short sequence motif" description="Nuclear localization signal 1 (NLS1)" evidence="1">
    <location>
        <begin position="802"/>
        <end position="805"/>
    </location>
</feature>
<feature type="short sequence motif" description="Nuclear localization signal 2 (NLS2)" evidence="1">
    <location>
        <begin position="832"/>
        <end position="835"/>
    </location>
</feature>
<feature type="compositionally biased region" description="Polar residues" evidence="4">
    <location>
        <begin position="793"/>
        <end position="829"/>
    </location>
</feature>
<feature type="compositionally biased region" description="Low complexity" evidence="4">
    <location>
        <begin position="923"/>
        <end position="937"/>
    </location>
</feature>
<feature type="compositionally biased region" description="Polar residues" evidence="4">
    <location>
        <begin position="938"/>
        <end position="951"/>
    </location>
</feature>
<feature type="compositionally biased region" description="Low complexity" evidence="4">
    <location>
        <begin position="991"/>
        <end position="1046"/>
    </location>
</feature>
<feature type="active site" description="Proton acceptor" evidence="28">
    <location>
        <position position="324"/>
    </location>
</feature>
<feature type="binding site" evidence="28">
    <location>
        <begin position="205"/>
        <end position="213"/>
    </location>
    <ligand>
        <name>ATP</name>
        <dbReference type="ChEBI" id="CHEBI:30616"/>
    </ligand>
</feature>
<feature type="binding site" evidence="28">
    <location>
        <position position="228"/>
    </location>
    <ligand>
        <name>ATP</name>
        <dbReference type="ChEBI" id="CHEBI:30616"/>
    </ligand>
</feature>
<feature type="site" description="Cleavage; by CASP6" evidence="1">
    <location>
        <begin position="923"/>
        <end position="924"/>
    </location>
</feature>
<feature type="site" description="Cleavage; by CASP6" evidence="1">
    <location>
        <begin position="984"/>
        <end position="985"/>
    </location>
</feature>
<feature type="modified residue" description="Phosphoserine" evidence="21">
    <location>
        <position position="16"/>
    </location>
</feature>
<feature type="modified residue" description="Phosphoserine" evidence="21">
    <location>
        <position position="118"/>
    </location>
</feature>
<feature type="modified residue" description="Phosphoserine" evidence="21">
    <location>
        <position position="135"/>
    </location>
</feature>
<feature type="modified residue" description="Phosphothreonine" evidence="21">
    <location>
        <position position="141"/>
    </location>
</feature>
<feature type="modified residue" description="Phosphothreonine" evidence="21">
    <location>
        <position position="252"/>
    </location>
</feature>
<feature type="modified residue" description="Phosphothreonine" evidence="21">
    <location>
        <position position="273"/>
    </location>
</feature>
<feature type="modified residue" description="Phosphotyrosine; by autocatalysis" evidence="21">
    <location>
        <position position="361"/>
    </location>
</feature>
<feature type="modified residue" description="Phosphoserine" evidence="21">
    <location>
        <position position="441"/>
    </location>
</feature>
<feature type="modified residue" description="Phosphothreonine" evidence="21">
    <location>
        <position position="482"/>
    </location>
</feature>
<feature type="modified residue" description="Phosphothreonine" evidence="21">
    <location>
        <position position="517"/>
    </location>
</feature>
<feature type="modified residue" description="Phosphothreonine" evidence="21">
    <location>
        <position position="566"/>
    </location>
</feature>
<feature type="modified residue" description="Phosphoserine" evidence="21">
    <location>
        <position position="634"/>
    </location>
</feature>
<feature type="modified residue" description="Phosphoserine" evidence="21">
    <location>
        <position position="668"/>
    </location>
</feature>
<feature type="modified residue" description="Phosphothreonine" evidence="21">
    <location>
        <position position="687"/>
    </location>
</feature>
<feature type="modified residue" description="Phosphoserine" evidence="21">
    <location>
        <position position="815"/>
    </location>
</feature>
<feature type="modified residue" description="Phosphoserine" evidence="21 29">
    <location>
        <position position="827"/>
    </location>
</feature>
<feature type="modified residue" description="Phosphoserine" evidence="21">
    <location>
        <position position="934"/>
    </location>
</feature>
<feature type="modified residue" description="Phosphoserine" evidence="21">
    <location>
        <position position="991"/>
    </location>
</feature>
<feature type="modified residue" description="Phosphoserine" evidence="21">
    <location>
        <position position="993"/>
    </location>
</feature>
<feature type="modified residue" description="Phosphoserine" evidence="21">
    <location>
        <position position="1042"/>
    </location>
</feature>
<feature type="modified residue" description="Phosphoserine" evidence="21">
    <location>
        <position position="1153"/>
    </location>
</feature>
<feature type="modified residue" description="Phosphoserine" evidence="21">
    <location>
        <position position="1186"/>
    </location>
</feature>
<feature type="cross-link" description="Glycyl lysine isopeptide (Lys-Gly) (interchain with G-Cter in SUMO); alternate" evidence="1">
    <location>
        <position position="32"/>
    </location>
</feature>
<feature type="cross-link" description="Glycyl lysine isopeptide (Lys-Gly) (interchain with G-Cter in SUMO2); alternate" evidence="2">
    <location>
        <position position="32"/>
    </location>
</feature>
<feature type="cross-link" description="Glycyl lysine isopeptide (Lys-Gly) (interchain with G-Cter in SUMO2)" evidence="2">
    <location>
        <position position="953"/>
    </location>
</feature>
<feature type="cross-link" description="Glycyl lysine isopeptide (Lys-Gly) (interchain with G-Cter in SUMO2)" evidence="2">
    <location>
        <position position="973"/>
    </location>
</feature>
<feature type="cross-link" description="Glycyl lysine isopeptide (Lys-Gly) (interchain with G-Cter in SUMO)">
    <location>
        <position position="1189"/>
    </location>
</feature>
<feature type="splice variant" id="VSP_013136" description="In isoform 5." evidence="26">
    <location>
        <begin position="1"/>
        <end position="480"/>
    </location>
</feature>
<feature type="splice variant" id="VSP_013135" description="In isoform 3 and isoform 4." evidence="24 26">
    <location>
        <begin position="1"/>
        <end position="7"/>
    </location>
</feature>
<feature type="splice variant" id="VSP_013137" description="In isoform 3." evidence="26">
    <location>
        <begin position="369"/>
        <end position="1196"/>
    </location>
</feature>
<feature type="splice variant" id="VSP_004808" description="In isoform 2 and isoform 4." evidence="23 24 25 27">
    <location>
        <begin position="594"/>
        <end position="620"/>
    </location>
</feature>
<feature type="splice variant" id="VSP_013138" description="In isoform 5." evidence="26">
    <original>APTTSSATLSL</original>
    <variation>KSQLIGLSPES</variation>
    <location>
        <begin position="595"/>
        <end position="605"/>
    </location>
</feature>
<feature type="splice variant" id="VSP_013139" description="In isoform 5." evidence="26">
    <location>
        <begin position="606"/>
        <end position="1196"/>
    </location>
</feature>
<feature type="mutagenesis site" description="No enzymatic activity, but still interacts with TP53 and NLK. Blocks the ability to induce cell growth arrest. Decreases corepressor activity." evidence="7 8 12 22">
    <original>K</original>
    <variation>R</variation>
    <location>
        <position position="228"/>
    </location>
</feature>
<feature type="mutagenesis site" description="Strongly reduced nuclear localization." evidence="21">
    <original>Y</original>
    <variation>A</variation>
    <location>
        <position position="361"/>
    </location>
</feature>
<feature type="mutagenesis site" description="Inhibits localization to nuclear speckles." evidence="5">
    <original>K</original>
    <variation>R</variation>
    <location>
        <position position="1189"/>
    </location>
</feature>
<feature type="sequence conflict" description="In Ref. 1; AAC63011." evidence="28" ref="1">
    <original>I</original>
    <variation>T</variation>
    <location>
        <position position="460"/>
    </location>
</feature>
<feature type="sequence conflict" description="In Ref. 1; AAC63011." evidence="28" ref="1">
    <original>V</original>
    <variation>G</variation>
    <location>
        <position position="479"/>
    </location>
</feature>
<feature type="sequence conflict" description="In Ref. 3; AAG41237 and 4; AAK07649." evidence="28" ref="3 4">
    <location>
        <position position="705"/>
    </location>
</feature>
<feature type="sequence conflict" description="In Ref. 1; AAC63011." evidence="28" ref="1">
    <original>A</original>
    <variation>T</variation>
    <location>
        <position position="719"/>
    </location>
</feature>
<feature type="sequence conflict" description="In Ref. 1; AAC63011." evidence="28" ref="1">
    <original>A</original>
    <variation>R</variation>
    <location>
        <position position="1120"/>
    </location>
</feature>
<feature type="sequence conflict" description="In Ref. 4; AAK07650." evidence="28" ref="4">
    <original>T</original>
    <variation>A</variation>
    <location>
        <position position="1132"/>
    </location>
</feature>
<accession>Q9QZR5</accession>
<accession>O88905</accession>
<accession>Q99P45</accession>
<accession>Q99P46</accession>
<accession>Q9D2E6</accession>
<accession>Q9D474</accession>
<accession>Q9EQL2</accession>
<accession>Q9QZR4</accession>
<organism>
    <name type="scientific">Mus musculus</name>
    <name type="common">Mouse</name>
    <dbReference type="NCBI Taxonomy" id="10090"/>
    <lineage>
        <taxon>Eukaryota</taxon>
        <taxon>Metazoa</taxon>
        <taxon>Chordata</taxon>
        <taxon>Craniata</taxon>
        <taxon>Vertebrata</taxon>
        <taxon>Euteleostomi</taxon>
        <taxon>Mammalia</taxon>
        <taxon>Eutheria</taxon>
        <taxon>Euarchontoglires</taxon>
        <taxon>Glires</taxon>
        <taxon>Rodentia</taxon>
        <taxon>Myomorpha</taxon>
        <taxon>Muroidea</taxon>
        <taxon>Muridae</taxon>
        <taxon>Murinae</taxon>
        <taxon>Mus</taxon>
        <taxon>Mus</taxon>
    </lineage>
</organism>
<name>HIPK2_MOUSE</name>
<protein>
    <recommendedName>
        <fullName>Homeodomain-interacting protein kinase 2</fullName>
        <ecNumber evidence="8">2.7.11.1</ecNumber>
    </recommendedName>
    <alternativeName>
        <fullName>Nuclear body-associated kinase 1</fullName>
    </alternativeName>
    <alternativeName>
        <fullName>Sialophorin tail-associated nuclear serine/threonine-protein kinase</fullName>
    </alternativeName>
</protein>
<keyword id="KW-0025">Alternative splicing</keyword>
<keyword id="KW-0053">Apoptosis</keyword>
<keyword id="KW-0067">ATP-binding</keyword>
<keyword id="KW-0963">Cytoplasm</keyword>
<keyword id="KW-0227">DNA damage</keyword>
<keyword id="KW-1017">Isopeptide bond</keyword>
<keyword id="KW-0418">Kinase</keyword>
<keyword id="KW-0547">Nucleotide-binding</keyword>
<keyword id="KW-0539">Nucleus</keyword>
<keyword id="KW-0597">Phosphoprotein</keyword>
<keyword id="KW-1185">Reference proteome</keyword>
<keyword id="KW-0723">Serine/threonine-protein kinase</keyword>
<keyword id="KW-0804">Transcription</keyword>
<keyword id="KW-0805">Transcription regulation</keyword>
<keyword id="KW-0808">Transferase</keyword>
<keyword id="KW-0043">Tumor suppressor</keyword>
<keyword id="KW-0832">Ubl conjugation</keyword>
<evidence type="ECO:0000250" key="1"/>
<evidence type="ECO:0000250" key="2">
    <source>
        <dbReference type="UniProtKB" id="Q9H2X6"/>
    </source>
</evidence>
<evidence type="ECO:0000255" key="3">
    <source>
        <dbReference type="PROSITE-ProRule" id="PRU00159"/>
    </source>
</evidence>
<evidence type="ECO:0000256" key="4">
    <source>
        <dbReference type="SAM" id="MobiDB-lite"/>
    </source>
</evidence>
<evidence type="ECO:0000269" key="5">
    <source>
    </source>
</evidence>
<evidence type="ECO:0000269" key="6">
    <source>
    </source>
</evidence>
<evidence type="ECO:0000269" key="7">
    <source>
    </source>
</evidence>
<evidence type="ECO:0000269" key="8">
    <source>
    </source>
</evidence>
<evidence type="ECO:0000269" key="9">
    <source>
    </source>
</evidence>
<evidence type="ECO:0000269" key="10">
    <source>
    </source>
</evidence>
<evidence type="ECO:0000269" key="11">
    <source>
    </source>
</evidence>
<evidence type="ECO:0000269" key="12">
    <source>
    </source>
</evidence>
<evidence type="ECO:0000269" key="13">
    <source>
    </source>
</evidence>
<evidence type="ECO:0000269" key="14">
    <source>
    </source>
</evidence>
<evidence type="ECO:0000269" key="15">
    <source>
    </source>
</evidence>
<evidence type="ECO:0000269" key="16">
    <source>
    </source>
</evidence>
<evidence type="ECO:0000269" key="17">
    <source>
    </source>
</evidence>
<evidence type="ECO:0000269" key="18">
    <source>
    </source>
</evidence>
<evidence type="ECO:0000269" key="19">
    <source>
    </source>
</evidence>
<evidence type="ECO:0000269" key="20">
    <source>
    </source>
</evidence>
<evidence type="ECO:0000269" key="21">
    <source>
    </source>
</evidence>
<evidence type="ECO:0000269" key="22">
    <source>
    </source>
</evidence>
<evidence type="ECO:0000303" key="23">
    <source>
    </source>
</evidence>
<evidence type="ECO:0000303" key="24">
    <source>
    </source>
</evidence>
<evidence type="ECO:0000303" key="25">
    <source>
    </source>
</evidence>
<evidence type="ECO:0000303" key="26">
    <source>
    </source>
</evidence>
<evidence type="ECO:0000303" key="27">
    <source ref="5"/>
</evidence>
<evidence type="ECO:0000305" key="28"/>
<evidence type="ECO:0007744" key="29">
    <source>
    </source>
</evidence>
<sequence length="1196" mass="130498">MAPVYEGMASHVQVFSPHTLQSSAFCSVKKLKVEPSSNWDMTGYGSHSKVYSQSKNIPPSQPASTTVSTSLPIPNPSLPYEQTIIFPGSTGHIVVTSASSTSVTGQVLGGPHNLMRRSTVSLLDTYQKCGLKRKSEEIENTSSVQIIEEHPPMIQNNASGATVATATTSTATSKNSGSNSEGDYQLVQHEVLCSMTNTYEVLEFLGRGTFGQVVKCWKRGTNEIVAIKILKNHPSYARQGQIEVSILARLSTESADDYNFVRAYECFQHKNHTCLVFEMLEQNLYDFLKQNKFSPLPLKYIRPVLQQVATALMKLKSLGLIHADLKPENIMLVDPSRQPYRVKVIDFGSASHVSKAVCSTYLQSRYYRAPEIILGLPFCEAIDMWSLGCVIAELFLGWPLYPGASEYDQIRYISQTQGLPAEYLLSAGTKTTRFFNRDTDSPYPLWRLKTPDDHEAETGIKSKEARKYIFNCLDDMAQVNMTTDLEGSDMLVEKADRREFIDLLKKMLTIDADKRVTPIETLNHPFVTMTHLLDFPHSAHVKSCFQNMEICKRRVNMYDTVNQSKTPFITHVAPSTSTNLTMTFNNQLTTVHNQAPTTSSATLSLANPEVSILNYQSALYQPSAASMAAVAPRSMPLQTGTAQICARPDPFQQALIVCPPGFQGLQASPSKHAGYSVRMENAVPIVTQAPGAQPLQIQPGLLAQQAWPGGAQQILLPPAWQQLTGVATHTSVQHAAVIPETMAGTQQLADWRNTHAHGSHYNPIMQQPALLTGHVTLPAAQPLNVGVAHVMRQQPTSTTSSRKSKQHQSSVRNVSTCEVTSSQAISSPQRSKRVKENTPPRCAMVHSSPACSTSVTCGWGDVASSTTRERQRQTIVIPDTPSPTVSVITISSDTDEEEEQKHAPTSTVSKQRKNVISCVTVHDSPYSDSSSNTSPYSVQQRTGHNGTNTLDTKGGLENHCTGNPRTIIVPPLKTQASEVLVECDSLGPAISASHHSSSFKSKSSSTVTSTSGHSSGSSSGAIAYRQQRPGPHFQQQQPLNLSQAQQHMAADRTGSHRRQQAYITPTMAQAPYTFPHNSPSHGTVHPHLAAAAHLPTQPHLYTYTAPTALGSTGTVAHLVASQGSARHTVQHTAYPASIVHQVPVSMGPRVLPSPTIHPSQYPAQFAHQTYISASPASTVYTGYPLSPAKVNQYPYI</sequence>
<comment type="function">
    <text evidence="2 7 8 10 12 13 15 17 18 19 20">Serine/threonine-protein kinase involved in transcription regulation, p53/TP53-mediated cellular apoptosis and regulation of the cell cycle. Acts as a corepressor of several transcription factors, including SMAD1 and POU4F1/Brn3a and probably NK homeodomain transcription factors. Phosphorylates PDX1, ATF1, PML, p53/TP53, CREB1, CTBP1, CBX4, RUNX1, EP300, CTNNB1, HMGA1, ZBTB4 and DAZAP2. Inhibits cell growth and promotes apoptosis through the activation of p53/TP53 both at the transcription level and at the protein level (by phosphorylation and indirect acetylation). The phosphorylation of p53/TP53 may be mediated by a p53/TP53-HIPK2-AXIN1 complex. Involved in the response to hypoxia by acting as a transcriptional co-suppressor of HIF1A. Mediates transcriptional activation of TP73. In response to TGFB, cooperates with DAXX to activate JNK. Negative regulator through phosphorylation and subsequent proteasomal degradation of CTNNB1 and the antiapoptotic factor CTBP1. In the Wnt/beta-catenin signaling pathway acts as an intermediate kinase between MAP3K7/TAK1 and NLK to promote the proteasomal degradation of MYB. Phosphorylates CBX4 upon DNA damage and promotes its E3 SUMO-protein ligase activity. Activates CREB1 and ATF1 transcription factors by phosphorylation in response to genotoxic stress. In response to DNA damage, stabilizes PML by phosphorylation. PML, HIPK2 and FBXO3 may act synergically to activate p53/TP53-dependent transactivation. Promotes angiogenesis, and is involved in erythroid differentiation, especially during fetal liver erythropoiesis. Phosphorylation of RUNX1 and EP300 stimulates EP300 transcription regulation activity. Triggers ZBTB4 protein degradation in response to DNA damage. In response to DNA damage, phosphorylates DAZAP2 which localizes DAZAP2 to the nucleus, reduces interaction of DAZAP2 with HIPK2 and prevents DAZAP2-dependent ubiquitination of HIPK2 by E3 ubiquitin-protein ligase SIAH1 and subsequent proteasomal degradation (By similarity). Modulates HMGA1 DNA-binding affinity. In response to high glucose, triggers phosphorylation-mediated subnuclear localization shifting of PDX1. Involved in the regulation of eye size, lens formation and retinal lamination during late embryogenesis.</text>
</comment>
<comment type="catalytic activity">
    <reaction evidence="8">
        <text>L-seryl-[protein] + ATP = O-phospho-L-seryl-[protein] + ADP + H(+)</text>
        <dbReference type="Rhea" id="RHEA:17989"/>
        <dbReference type="Rhea" id="RHEA-COMP:9863"/>
        <dbReference type="Rhea" id="RHEA-COMP:11604"/>
        <dbReference type="ChEBI" id="CHEBI:15378"/>
        <dbReference type="ChEBI" id="CHEBI:29999"/>
        <dbReference type="ChEBI" id="CHEBI:30616"/>
        <dbReference type="ChEBI" id="CHEBI:83421"/>
        <dbReference type="ChEBI" id="CHEBI:456216"/>
        <dbReference type="EC" id="2.7.11.1"/>
    </reaction>
</comment>
<comment type="catalytic activity">
    <reaction evidence="8">
        <text>L-threonyl-[protein] + ATP = O-phospho-L-threonyl-[protein] + ADP + H(+)</text>
        <dbReference type="Rhea" id="RHEA:46608"/>
        <dbReference type="Rhea" id="RHEA-COMP:11060"/>
        <dbReference type="Rhea" id="RHEA-COMP:11605"/>
        <dbReference type="ChEBI" id="CHEBI:15378"/>
        <dbReference type="ChEBI" id="CHEBI:30013"/>
        <dbReference type="ChEBI" id="CHEBI:30616"/>
        <dbReference type="ChEBI" id="CHEBI:61977"/>
        <dbReference type="ChEBI" id="CHEBI:456216"/>
        <dbReference type="EC" id="2.7.11.1"/>
    </reaction>
</comment>
<comment type="subunit">
    <text evidence="2 5 6 7 8 10 12 13 14 15 22">Interacts with CREB1, SIAH1, WSB1, CBX4, TRADD, p53/TP53, TP73, TP63, CREBBP, DAXX, P53DINP1, SKI, SMAD1, SMAD2 and SMAD3, but not SMAD4. Interacts with SP100; positively regulates TP53-dependent transcription (By similarity). Interacts with ATF1, PML, RUNX1, EP300, NKX1-2, NKX2-5, UBE2I, HMGA1, CTBP1, AXIN1, NLK, MYB, POU4F1, POU4F2, POU4F3, UBE2I, UBL1 and ZBTB4. Probably part of a complex consisting of p53/TP53, HIPK2 and AXIN1. Interacts with DAZAP2; the interaction results in phosphorylation of DAZAP2 which causes localization of DAZAP2 to the nucleus, reduces interaction of DAZAP2 with HIPK2 and prevents DAZAP2-dependent degradation of HIPK2 (By similarity). Interacts with SIAH1; the interaction is promoted by DAZAP2 and results in SIAH1-mediated ubiquitination and subsequent proteasomal degradation of HIPK2 (By similarity).</text>
</comment>
<comment type="subunit">
    <molecule>Isoform 2</molecule>
    <text evidence="6">Interacts with SPN/CD43 cytoplasmic tail.</text>
</comment>
<comment type="interaction">
    <interactant intactId="EBI-366905">
        <id>Q9QZR5</id>
    </interactant>
    <interactant intactId="EBI-643797">
        <id>Q8CFN5</id>
        <label>Mef2c</label>
    </interactant>
    <organismsDiffer>false</organismsDiffer>
    <experiments>5</experiments>
</comment>
<comment type="interaction">
    <interactant intactId="EBI-366905">
        <id>Q9QZR5</id>
    </interactant>
    <interactant intactId="EBI-366934">
        <id>P06876</id>
        <label>Myb</label>
    </interactant>
    <organismsDiffer>false</organismsDiffer>
    <experiments>2</experiments>
</comment>
<comment type="interaction">
    <interactant intactId="EBI-366905">
        <id>Q9QZR5</id>
    </interactant>
    <interactant intactId="EBI-366894">
        <id>O54949</id>
        <label>Nlk</label>
    </interactant>
    <organismsDiffer>false</organismsDiffer>
    <experiments>2</experiments>
</comment>
<comment type="interaction">
    <interactant intactId="EBI-366905">
        <id>Q9QZR5</id>
    </interactant>
    <interactant intactId="EBI-1189067">
        <id>P51608</id>
        <label>MECP2</label>
    </interactant>
    <organismsDiffer>true</organismsDiffer>
    <experiments>3</experiments>
</comment>
<comment type="interaction">
    <interactant intactId="EBI-366905">
        <id>Q9QZR5</id>
    </interactant>
    <interactant intactId="EBI-1171494">
        <id>Q9Y6I7</id>
        <label>WSB1</label>
    </interactant>
    <organismsDiffer>true</organismsDiffer>
    <experiments>5</experiments>
</comment>
<comment type="subcellular location">
    <subcellularLocation>
        <location evidence="5 6 11 19 22">Nucleus</location>
        <location evidence="5 6 11 19 22">PML body</location>
    </subcellularLocation>
    <subcellularLocation>
        <location evidence="2">Cytoplasm</location>
    </subcellularLocation>
</comment>
<comment type="subcellular location">
    <molecule>Isoform 2</molecule>
    <subcellularLocation>
        <location evidence="6">Nucleus</location>
    </subcellularLocation>
    <subcellularLocation>
        <location evidence="6">Cytoplasm</location>
    </subcellularLocation>
    <text>Isoform 2 seems to be both nuclear and cytoplasmic.</text>
</comment>
<comment type="alternative products">
    <event type="alternative splicing"/>
    <isoform>
        <id>Q9QZR5-1</id>
        <name>1</name>
        <name>Nbak1b</name>
        <name>b</name>
        <sequence type="displayed"/>
    </isoform>
    <isoform>
        <id>Q9QZR5-2</id>
        <name>2</name>
        <name>Nbak1a</name>
        <name>a</name>
        <sequence type="described" ref="VSP_004808"/>
    </isoform>
    <isoform>
        <id>Q9QZR5-3</id>
        <name>3</name>
        <sequence type="described" ref="VSP_013135 VSP_013137"/>
    </isoform>
    <isoform>
        <id>Q9QZR5-4</id>
        <name>4</name>
        <sequence type="described" ref="VSP_013135 VSP_004808"/>
    </isoform>
    <isoform>
        <id>Q9QZR5-5</id>
        <name>5</name>
        <sequence type="described" ref="VSP_013136 VSP_013138 VSP_013139"/>
    </isoform>
</comment>
<comment type="tissue specificity">
    <text evidence="6 9 11">Ubiquitous. Abundant in muscle, heart, small intestine, stomach, kidney and brain; and low in testis, skin and lung.</text>
</comment>
<comment type="developmental stage">
    <text evidence="9 13 17 19">At 15 dpc-17 dpc, mainly in the developing retina, telencephalon and myoblasts. At 12.5 dpc, detected in the developing trigeminal and dorsal root ganglia, and in the developing spinal cord (at protein level). Highly induced during primary fetal liver erythropoiesis. Expressed in the inner retina during late embryogenesis, in nucleus. Highest levels at 14.5 dpc for isoform 2 and P12.5 for isoform 1.</text>
</comment>
<comment type="induction">
    <text evidence="6 16">During T-cell activation.</text>
</comment>
<comment type="PTM">
    <text evidence="1">Sumoylated. When conjugated it is directed to nuclear speckles. Desumoylated by SENP1. Sumoylation on Lys-32 is promoted by the E3 SUMO-protein ligase CBX4 (By similarity).</text>
</comment>
<comment type="PTM">
    <text evidence="21">Autophosphorylation at Tyr-361 in the activation loop activates the kinase and promotes nuclear localization.</text>
</comment>
<comment type="PTM">
    <text evidence="2">Ubiquitinated by FBXO3, WSB1 and SIAH1, leading to rapid proteasome-dependent degradation. The degradation mediated by FBXO3, but not ubiquitination, is prevented in the presence of PML. The degradation mediated by WSB1 and SIAH1 is reversibly reduced upon DNA damage.</text>
</comment>
<comment type="PTM">
    <text>Cleaved at Asp-923 and Asp-984 by CASP6 in a p53/TP53-dependent manner. The cleaved form lacks the autoinhibitory C-terminal domain (AID), resulting in a hyperactive kinase, which potentiates p53/TP53 Ser-46 phosphorylation and subsequent activation of the cell death machinery.</text>
</comment>
<comment type="disruption phenotype">
    <text evidence="17 18 19">Inhibited terminal erythroid cell proliferation and terminal enucleation, as well as reduced accumulation of hemoglobin. Impaired transcription of many genes involved in cell proliferation and apoptosis, and of erythroid-specific genes involved in hemoglobin biosynthesis, such as HBA and SLC25A37/MFRN. Enhanced stability of CTNNB1; accumulation of beta-catenin leading to the potentiation of beta-catenin-mediated cell proliferation and tumor formation. Small eyes with deficient lens, abnormal retinal lamination, and thickened retinas.</text>
</comment>
<comment type="similarity">
    <text evidence="28">Belongs to the protein kinase superfamily. CMGC Ser/Thr protein kinase family. HIPK subfamily.</text>
</comment>
<comment type="sequence caution" evidence="28">
    <conflict type="frameshift">
        <sequence resource="EMBL-CDS" id="AAC63011"/>
    </conflict>
</comment>
<reference key="1">
    <citation type="journal article" date="1998" name="J. Biol. Chem.">
        <title>Homeodomain-interacting protein kinases, a novel family of co-repressors for homeodomain transcription factors.</title>
        <authorList>
            <person name="Kim Y.H."/>
            <person name="Choi C.Y."/>
            <person name="Lee S.-J."/>
            <person name="Conti M.A."/>
            <person name="Kim Y."/>
        </authorList>
    </citation>
    <scope>NUCLEOTIDE SEQUENCE [MRNA] (ISOFORM 1)</scope>
    <scope>SUBCELLULAR LOCATION</scope>
    <scope>INTERACTION WITH NKX1-2 AND NKX2-5</scope>
    <scope>MUTAGENESIS OF LYS-228</scope>
    <source>
        <strain>BALB/cJ</strain>
    </source>
</reference>
<reference key="2">
    <citation type="journal article" date="2000" name="Cell. Immunol.">
        <title>Identification and cloning of a CD43-associated serine/threonine kinase.</title>
        <authorList>
            <person name="Wang W."/>
            <person name="Link V."/>
            <person name="Green J.M."/>
        </authorList>
    </citation>
    <scope>NUCLEOTIDE SEQUENCE [MRNA] (ISOFORM 2)</scope>
    <scope>INTERACTION WITH SPN/CD43 CYTOPLASMIC TAIL (ISOFORM 2)</scope>
    <scope>TISSUE SPECIFICITY</scope>
    <scope>SUBCELLULAR LOCATION (ISOFORM 2)</scope>
    <scope>INDUCTION</scope>
    <source>
        <strain>BALB/cJ</strain>
        <tissue>Heart</tissue>
    </source>
</reference>
<reference key="3">
    <citation type="journal article" date="2001" name="Biochim. Biophys. Acta">
        <title>Isolation and characterization of cDNAs for the protein kinase HIPK2.</title>
        <authorList>
            <person name="Wang Y."/>
            <person name="Hofmann T.G."/>
            <person name="Runkel L."/>
            <person name="Haaf T."/>
            <person name="Schaller H."/>
            <person name="Debatin K.-M."/>
            <person name="Hug H."/>
        </authorList>
    </citation>
    <scope>NUCLEOTIDE SEQUENCE [MRNA] (ISOFORM 4)</scope>
</reference>
<reference key="4">
    <citation type="journal article" date="2004" name="J. Virol.">
        <title>US11 of herpes simplex virus type 1 interacts with HIPK2 and antagonizes HIPK2-induced cell growth arrest.</title>
        <authorList>
            <person name="Giraud S."/>
            <person name="Diaz-Latoud C."/>
            <person name="Hacot S."/>
            <person name="Textoris J."/>
            <person name="Bourette R.P."/>
            <person name="Diaz J.-J."/>
        </authorList>
    </citation>
    <scope>NUCLEOTIDE SEQUENCE [MRNA] (ISOFORMS 1 AND 2)</scope>
    <scope>TISSUE SPECIFICITY</scope>
    <scope>SUBCELLULAR LOCATION</scope>
    <source>
        <tissue>Heart</tissue>
    </source>
</reference>
<reference key="5">
    <citation type="submission" date="1999-07" db="EMBL/GenBank/DDBJ databases">
        <title>Protein kinases associated with PML/CBP nuclear bodies and filamentous threads regulate transcription and inhibit cell growth.</title>
        <authorList>
            <person name="Sather S.L."/>
            <person name="Johnson N.L."/>
            <person name="Johnson G.L."/>
        </authorList>
    </citation>
    <scope>NUCLEOTIDE SEQUENCE [MRNA] (ISOFORMS 1 AND 2)</scope>
</reference>
<reference key="6">
    <citation type="journal article" date="2005" name="Science">
        <title>The transcriptional landscape of the mammalian genome.</title>
        <authorList>
            <person name="Carninci P."/>
            <person name="Kasukawa T."/>
            <person name="Katayama S."/>
            <person name="Gough J."/>
            <person name="Frith M.C."/>
            <person name="Maeda N."/>
            <person name="Oyama R."/>
            <person name="Ravasi T."/>
            <person name="Lenhard B."/>
            <person name="Wells C."/>
            <person name="Kodzius R."/>
            <person name="Shimokawa K."/>
            <person name="Bajic V.B."/>
            <person name="Brenner S.E."/>
            <person name="Batalov S."/>
            <person name="Forrest A.R."/>
            <person name="Zavolan M."/>
            <person name="Davis M.J."/>
            <person name="Wilming L.G."/>
            <person name="Aidinis V."/>
            <person name="Allen J.E."/>
            <person name="Ambesi-Impiombato A."/>
            <person name="Apweiler R."/>
            <person name="Aturaliya R.N."/>
            <person name="Bailey T.L."/>
            <person name="Bansal M."/>
            <person name="Baxter L."/>
            <person name="Beisel K.W."/>
            <person name="Bersano T."/>
            <person name="Bono H."/>
            <person name="Chalk A.M."/>
            <person name="Chiu K.P."/>
            <person name="Choudhary V."/>
            <person name="Christoffels A."/>
            <person name="Clutterbuck D.R."/>
            <person name="Crowe M.L."/>
            <person name="Dalla E."/>
            <person name="Dalrymple B.P."/>
            <person name="de Bono B."/>
            <person name="Della Gatta G."/>
            <person name="di Bernardo D."/>
            <person name="Down T."/>
            <person name="Engstrom P."/>
            <person name="Fagiolini M."/>
            <person name="Faulkner G."/>
            <person name="Fletcher C.F."/>
            <person name="Fukushima T."/>
            <person name="Furuno M."/>
            <person name="Futaki S."/>
            <person name="Gariboldi M."/>
            <person name="Georgii-Hemming P."/>
            <person name="Gingeras T.R."/>
            <person name="Gojobori T."/>
            <person name="Green R.E."/>
            <person name="Gustincich S."/>
            <person name="Harbers M."/>
            <person name="Hayashi Y."/>
            <person name="Hensch T.K."/>
            <person name="Hirokawa N."/>
            <person name="Hill D."/>
            <person name="Huminiecki L."/>
            <person name="Iacono M."/>
            <person name="Ikeo K."/>
            <person name="Iwama A."/>
            <person name="Ishikawa T."/>
            <person name="Jakt M."/>
            <person name="Kanapin A."/>
            <person name="Katoh M."/>
            <person name="Kawasawa Y."/>
            <person name="Kelso J."/>
            <person name="Kitamura H."/>
            <person name="Kitano H."/>
            <person name="Kollias G."/>
            <person name="Krishnan S.P."/>
            <person name="Kruger A."/>
            <person name="Kummerfeld S.K."/>
            <person name="Kurochkin I.V."/>
            <person name="Lareau L.F."/>
            <person name="Lazarevic D."/>
            <person name="Lipovich L."/>
            <person name="Liu J."/>
            <person name="Liuni S."/>
            <person name="McWilliam S."/>
            <person name="Madan Babu M."/>
            <person name="Madera M."/>
            <person name="Marchionni L."/>
            <person name="Matsuda H."/>
            <person name="Matsuzawa S."/>
            <person name="Miki H."/>
            <person name="Mignone F."/>
            <person name="Miyake S."/>
            <person name="Morris K."/>
            <person name="Mottagui-Tabar S."/>
            <person name="Mulder N."/>
            <person name="Nakano N."/>
            <person name="Nakauchi H."/>
            <person name="Ng P."/>
            <person name="Nilsson R."/>
            <person name="Nishiguchi S."/>
            <person name="Nishikawa S."/>
            <person name="Nori F."/>
            <person name="Ohara O."/>
            <person name="Okazaki Y."/>
            <person name="Orlando V."/>
            <person name="Pang K.C."/>
            <person name="Pavan W.J."/>
            <person name="Pavesi G."/>
            <person name="Pesole G."/>
            <person name="Petrovsky N."/>
            <person name="Piazza S."/>
            <person name="Reed J."/>
            <person name="Reid J.F."/>
            <person name="Ring B.Z."/>
            <person name="Ringwald M."/>
            <person name="Rost B."/>
            <person name="Ruan Y."/>
            <person name="Salzberg S.L."/>
            <person name="Sandelin A."/>
            <person name="Schneider C."/>
            <person name="Schoenbach C."/>
            <person name="Sekiguchi K."/>
            <person name="Semple C.A."/>
            <person name="Seno S."/>
            <person name="Sessa L."/>
            <person name="Sheng Y."/>
            <person name="Shibata Y."/>
            <person name="Shimada H."/>
            <person name="Shimada K."/>
            <person name="Silva D."/>
            <person name="Sinclair B."/>
            <person name="Sperling S."/>
            <person name="Stupka E."/>
            <person name="Sugiura K."/>
            <person name="Sultana R."/>
            <person name="Takenaka Y."/>
            <person name="Taki K."/>
            <person name="Tammoja K."/>
            <person name="Tan S.L."/>
            <person name="Tang S."/>
            <person name="Taylor M.S."/>
            <person name="Tegner J."/>
            <person name="Teichmann S.A."/>
            <person name="Ueda H.R."/>
            <person name="van Nimwegen E."/>
            <person name="Verardo R."/>
            <person name="Wei C.L."/>
            <person name="Yagi K."/>
            <person name="Yamanishi H."/>
            <person name="Zabarovsky E."/>
            <person name="Zhu S."/>
            <person name="Zimmer A."/>
            <person name="Hide W."/>
            <person name="Bult C."/>
            <person name="Grimmond S.M."/>
            <person name="Teasdale R.D."/>
            <person name="Liu E.T."/>
            <person name="Brusic V."/>
            <person name="Quackenbush J."/>
            <person name="Wahlestedt C."/>
            <person name="Mattick J.S."/>
            <person name="Hume D.A."/>
            <person name="Kai C."/>
            <person name="Sasaki D."/>
            <person name="Tomaru Y."/>
            <person name="Fukuda S."/>
            <person name="Kanamori-Katayama M."/>
            <person name="Suzuki M."/>
            <person name="Aoki J."/>
            <person name="Arakawa T."/>
            <person name="Iida J."/>
            <person name="Imamura K."/>
            <person name="Itoh M."/>
            <person name="Kato T."/>
            <person name="Kawaji H."/>
            <person name="Kawagashira N."/>
            <person name="Kawashima T."/>
            <person name="Kojima M."/>
            <person name="Kondo S."/>
            <person name="Konno H."/>
            <person name="Nakano K."/>
            <person name="Ninomiya N."/>
            <person name="Nishio T."/>
            <person name="Okada M."/>
            <person name="Plessy C."/>
            <person name="Shibata K."/>
            <person name="Shiraki T."/>
            <person name="Suzuki S."/>
            <person name="Tagami M."/>
            <person name="Waki K."/>
            <person name="Watahiki A."/>
            <person name="Okamura-Oho Y."/>
            <person name="Suzuki H."/>
            <person name="Kawai J."/>
            <person name="Hayashizaki Y."/>
        </authorList>
    </citation>
    <scope>NUCLEOTIDE SEQUENCE [LARGE SCALE MRNA] (ISOFORMS 3 AND 5)</scope>
    <source>
        <strain>C57BL/6J</strain>
        <tissue>Testis</tissue>
    </source>
</reference>
<reference key="7">
    <citation type="journal article" date="1999" name="Proc. Natl. Acad. Sci. U.S.A.">
        <title>Covalent modification of the homeodomain-interacting protein kinase 2 (HIPK2) by the ubiquitin-like protein SUMO-1.</title>
        <authorList>
            <person name="Kim Y.H."/>
            <person name="Choi C.Y."/>
            <person name="Kim Y."/>
        </authorList>
    </citation>
    <scope>SUBCELLULAR LOCATION</scope>
    <scope>INTERACTION WITH UBE2I</scope>
    <scope>SUMOYLATION</scope>
    <scope>MUTAGENESIS OF LYS-1189</scope>
</reference>
<reference key="8">
    <citation type="journal article" date="2001" name="Oncogene">
        <title>High mobility group I (Y) proteins bind HIPK2, a serine-threonine kinase protein which inhibits cell growth.</title>
        <authorList>
            <person name="Pierantoni G.M."/>
            <person name="Fedele M."/>
            <person name="Pentimalli F."/>
            <person name="Benvenuto G."/>
            <person name="Pero R."/>
            <person name="Viglietto G."/>
            <person name="Santoro M."/>
            <person name="Chiariotti L."/>
            <person name="Fusco A."/>
        </authorList>
    </citation>
    <scope>INTERACTION WITH HMGA1</scope>
    <scope>FUNCTION</scope>
    <scope>PHOSPHORYLATION</scope>
    <scope>AUTOPHOSPHORYLATION</scope>
    <scope>MUTAGENESIS OF LYS-228</scope>
</reference>
<reference key="9">
    <citation type="journal article" date="2002" name="Biochem. Biophys. Res. Commun.">
        <title>The homeodomain-interacting protein kinase 2 gene is expressed late in embryogenesis and preferentially in retina, muscle, and neural tissues.</title>
        <authorList>
            <person name="Pierantoni G.M."/>
            <person name="Bulfone A."/>
            <person name="Pentimalli F."/>
            <person name="Fedele M."/>
            <person name="Iuliano R."/>
            <person name="Santoro M."/>
            <person name="Chiariotti L."/>
            <person name="Ballabio A."/>
            <person name="Fusco A."/>
        </authorList>
    </citation>
    <scope>TISSUE SPECIFICITY</scope>
    <scope>DEVELOPMENTAL STAGE</scope>
</reference>
<reference key="10">
    <citation type="journal article" date="2002" name="Nat. Cell Biol.">
        <title>Homeodomain-interacting protein kinase-2 phosphorylates p53 at Ser 46 and mediates apoptosis.</title>
        <authorList>
            <person name="D'Orazi G."/>
            <person name="Cecchinelli B."/>
            <person name="Bruno T."/>
            <person name="Manni I."/>
            <person name="Higashimoto Y."/>
            <person name="Saito S."/>
            <person name="Gostissa M."/>
            <person name="Coen S."/>
            <person name="Marchetti A."/>
            <person name="Del Sal G."/>
            <person name="Piaggio G."/>
            <person name="Fanciulli M."/>
            <person name="Appella E."/>
            <person name="Soddu S."/>
        </authorList>
    </citation>
    <scope>FUNCTION</scope>
    <scope>CATALYTIC ACTIVITY</scope>
    <scope>INTERACTION WITH TP53</scope>
    <scope>AUTOPHOSPHORYLATION</scope>
    <scope>MUTAGENESIS OF LYS-228</scope>
</reference>
<reference key="11">
    <citation type="journal article" date="2003" name="Cell">
        <title>Homeodomain interacting protein kinase 2 promotes apoptosis by downregulating the transcriptional corepressor CtBP.</title>
        <authorList>
            <person name="Zhang Q."/>
            <person name="Yoshimatsu Y."/>
            <person name="Hildebrand J."/>
            <person name="Frisch S.M."/>
            <person name="Goodman R.H."/>
        </authorList>
    </citation>
    <scope>FUNCTION</scope>
    <scope>INTERACTION WITH CTBP1</scope>
</reference>
<reference key="12">
    <citation type="journal article" date="2004" name="EMBO J.">
        <title>Axin stimulates p53 functions by activation of HIPK2 kinase through multimeric complex formation.</title>
        <authorList>
            <person name="Rui Y."/>
            <person name="Xu Z."/>
            <person name="Lin S."/>
            <person name="Li Q."/>
            <person name="Rui H."/>
            <person name="Luo W."/>
            <person name="Zhou H.-M."/>
            <person name="Cheung P.-Y."/>
            <person name="Wu Z."/>
            <person name="Ye Z."/>
            <person name="Li P."/>
            <person name="Han J."/>
            <person name="Lin S.-C."/>
        </authorList>
    </citation>
    <scope>INTERACTION WITH AXIN1</scope>
    <scope>IDENTIFICATION IN A COMPLEX WITH TP53 AND AXIN1</scope>
</reference>
<reference key="13">
    <citation type="journal article" date="2004" name="Genes Dev.">
        <title>Wnt-1 signal induces phosphorylation and degradation of c-Myb protein via TAK1, HIPK2, and NLK.</title>
        <authorList>
            <person name="Kanei-Ishii C."/>
            <person name="Ninomiya-Tsuji J."/>
            <person name="Tanikawa J."/>
            <person name="Nomura T."/>
            <person name="Ishitani T."/>
            <person name="Kishida S."/>
            <person name="Kokura K."/>
            <person name="Kurahashi T."/>
            <person name="Ichikawa-Iwata E."/>
            <person name="Kim Y."/>
            <person name="Matsumoto K."/>
            <person name="Ishii S."/>
        </authorList>
    </citation>
    <scope>FUNCTION IN WNT SIGNALING</scope>
    <scope>INTERACTION WITH NLK AND MYB</scope>
    <scope>MUTAGENESIS OF LYS-228</scope>
</reference>
<reference key="14">
    <citation type="journal article" date="2004" name="J. Cell Biol.">
        <title>Interaction of Brn3a and HIPK2 mediates transcriptional repression of sensory neuron survival.</title>
        <authorList>
            <person name="Wiggins A.K."/>
            <person name="Wei G."/>
            <person name="Doxakis E."/>
            <person name="Wong C."/>
            <person name="Tang A.A."/>
            <person name="Zang K."/>
            <person name="Luo E.J."/>
            <person name="Neve R.L."/>
            <person name="Reichardt L.F."/>
            <person name="Huang E.J."/>
        </authorList>
    </citation>
    <scope>FUNCTION</scope>
    <scope>INTERACTION WITH POU4F1; POU4F2 AND POU4F3</scope>
    <scope>DEVELOPMENTAL STAGE</scope>
</reference>
<reference key="15">
    <citation type="journal article" date="2006" name="EMBO J.">
        <title>Roles of HIPK1 and HIPK2 in AML1- and p300-dependent transcription, hematopoiesis and blood vessel formation.</title>
        <authorList>
            <person name="Aikawa Y."/>
            <person name="Nguyen L.A."/>
            <person name="Isono K."/>
            <person name="Takakura N."/>
            <person name="Tagata Y."/>
            <person name="Schmitz M.L."/>
            <person name="Koseki H."/>
            <person name="Kitabayashi I."/>
        </authorList>
    </citation>
    <scope>FUNCTION AS KINASE AND IN ANGIOGENESIS</scope>
    <scope>INTERACTION WITH RUNX1 AND EP300</scope>
</reference>
<reference key="16">
    <citation type="journal article" date="2009" name="PLoS ONE">
        <title>Targeting hypoxia in cancer cells by restoring homeodomain interacting protein-kinase 2 and p53 activity and suppressing HIF-1alpha.</title>
        <authorList>
            <person name="Nardinocchi L."/>
            <person name="Puca R."/>
            <person name="Sacchi A."/>
            <person name="Rechavi G."/>
            <person name="Givol D."/>
            <person name="D'Orazi G."/>
        </authorList>
    </citation>
    <scope>INDUCTION BY ZINC DURING HYPOXIA</scope>
</reference>
<reference key="17">
    <citation type="journal article" date="2010" name="Biochem. Biophys. Res. Commun.">
        <title>Homeodomain-interacting protein kinase 2 (HIPK2) targets beta-catenin for phosphorylation and proteasomal degradation.</title>
        <authorList>
            <person name="Kim E.-A."/>
            <person name="Kim J.E."/>
            <person name="Sung K.S."/>
            <person name="Choi D.W."/>
            <person name="Lee B.J."/>
            <person name="Choi C.Y."/>
        </authorList>
    </citation>
    <scope>FUNCTION AS CTNNB1 KINASE</scope>
    <scope>DISRUPTION PHENOTYPE</scope>
</reference>
<reference key="18">
    <citation type="journal article" date="2010" name="Biochem. Biophys. Res. Commun.">
        <title>Pancreatic and duodenal homeobox 1 (PDX1) phosphorylation at serine-269 is HIPK2-dependent and affects PDX1 subnuclear localization.</title>
        <authorList>
            <person name="An R."/>
            <person name="da Silva Xavier G."/>
            <person name="Semplici F."/>
            <person name="Vakhshouri S."/>
            <person name="Hao H.X."/>
            <person name="Rutter J."/>
            <person name="Pagano M.A."/>
            <person name="Meggio F."/>
            <person name="Pinna L.A."/>
            <person name="Rutter G.A."/>
        </authorList>
    </citation>
    <scope>FUNCTION AS PDX1 KINASE</scope>
</reference>
<reference key="19">
    <citation type="journal article" date="2010" name="Blood">
        <title>Homeodomain-interacting protein kinase 2 plays an important role in normal terminal erythroid differentiation.</title>
        <authorList>
            <person name="Hattangadi S.M."/>
            <person name="Burke K.A."/>
            <person name="Lodish H.F."/>
        </authorList>
    </citation>
    <scope>FUNCTION</scope>
    <scope>DISRUPTION PHENOTYPE</scope>
    <scope>DEVELOPMENTAL STAGE</scope>
</reference>
<reference key="20">
    <citation type="journal article" date="2010" name="Cell">
        <title>A tissue-specific atlas of mouse protein phosphorylation and expression.</title>
        <authorList>
            <person name="Huttlin E.L."/>
            <person name="Jedrychowski M.P."/>
            <person name="Elias J.E."/>
            <person name="Goswami T."/>
            <person name="Rad R."/>
            <person name="Beausoleil S.A."/>
            <person name="Villen J."/>
            <person name="Haas W."/>
            <person name="Sowa M.E."/>
            <person name="Gygi S.P."/>
        </authorList>
    </citation>
    <scope>PHOSPHORYLATION [LARGE SCALE ANALYSIS] AT SER-827</scope>
    <scope>IDENTIFICATION BY MASS SPECTROMETRY [LARGE SCALE ANALYSIS]</scope>
    <source>
        <tissue>Pancreas</tissue>
    </source>
</reference>
<reference key="21">
    <citation type="journal article" date="2010" name="FEBS Lett.">
        <title>Involvement of the Hipk family in regulation of eyeball size, lens formation and retinal morphogenesis.</title>
        <authorList>
            <person name="Inoue T."/>
            <person name="Kagawa T."/>
            <person name="Inoue-Mochita M."/>
            <person name="Isono K."/>
            <person name="Ohtsu N."/>
            <person name="Nobuhisa I."/>
            <person name="Fukushima M."/>
            <person name="Tanihara H."/>
            <person name="Taga T."/>
        </authorList>
    </citation>
    <scope>FUNCTION IN EYE DEVELOPMENT</scope>
    <scope>DEVELOPMENTAL STAGE</scope>
    <scope>SUBCELLULAR LOCATION</scope>
    <scope>DISRUPTION PHENOTYPE</scope>
</reference>
<reference key="22">
    <citation type="journal article" date="2013" name="Biochim. Biophys. Acta">
        <title>HIPK2 catalytic activity and subcellular localization are regulated by activation-loop Y354 autophosphorylation.</title>
        <authorList>
            <person name="Siepi F."/>
            <person name="Gatti V."/>
            <person name="Camerini S."/>
            <person name="Crescenzi M."/>
            <person name="Soddu S."/>
        </authorList>
    </citation>
    <scope>PHOSPHORYLATION AT SER-16; SER-118; SER-135; THR-141; THR-252; THR-273; TYR-361; SER-441; THR-482; THR-517; THR-566; SER-634; SER-668; THR-687; SER-815; SER-827; SER-934; SER-991; SER-993; SER-1042; SER-1153 AND SER-1186</scope>
    <scope>ACTIVITY REGULATION</scope>
    <scope>MUTAGENESIS OF TYR-361</scope>
</reference>